<feature type="chain" id="PRO_0000077076" description="Large ribosomal subunit protein uL3">
    <location>
        <begin position="1"/>
        <end position="237"/>
    </location>
</feature>
<feature type="region of interest" description="Disordered" evidence="2">
    <location>
        <begin position="133"/>
        <end position="155"/>
    </location>
</feature>
<feature type="region of interest" description="Disordered" evidence="2">
    <location>
        <begin position="213"/>
        <end position="237"/>
    </location>
</feature>
<feature type="compositionally biased region" description="Polar residues" evidence="2">
    <location>
        <begin position="135"/>
        <end position="150"/>
    </location>
</feature>
<feature type="compositionally biased region" description="Low complexity" evidence="2">
    <location>
        <begin position="220"/>
        <end position="237"/>
    </location>
</feature>
<feature type="modified residue" description="N5-methylglutamine" evidence="1">
    <location>
        <position position="151"/>
    </location>
</feature>
<accession>Q8G076</accession>
<accession>G0KAF4</accession>
<comment type="function">
    <text evidence="1">One of the primary rRNA binding proteins, it binds directly near the 3'-end of the 23S rRNA, where it nucleates assembly of the 50S subunit.</text>
</comment>
<comment type="subunit">
    <text evidence="1">Part of the 50S ribosomal subunit. Forms a cluster with proteins L14 and L19.</text>
</comment>
<comment type="PTM">
    <text evidence="1">Methylated by PrmB.</text>
</comment>
<comment type="similarity">
    <text evidence="1">Belongs to the universal ribosomal protein uL3 family.</text>
</comment>
<organism>
    <name type="scientific">Brucella suis biovar 1 (strain 1330)</name>
    <dbReference type="NCBI Taxonomy" id="204722"/>
    <lineage>
        <taxon>Bacteria</taxon>
        <taxon>Pseudomonadati</taxon>
        <taxon>Pseudomonadota</taxon>
        <taxon>Alphaproteobacteria</taxon>
        <taxon>Hyphomicrobiales</taxon>
        <taxon>Brucellaceae</taxon>
        <taxon>Brucella/Ochrobactrum group</taxon>
        <taxon>Brucella</taxon>
    </lineage>
</organism>
<dbReference type="EMBL" id="AE014291">
    <property type="protein sequence ID" value="AAN30152.1"/>
    <property type="molecule type" value="Genomic_DNA"/>
</dbReference>
<dbReference type="EMBL" id="CP002997">
    <property type="protein sequence ID" value="AEM18570.1"/>
    <property type="molecule type" value="Genomic_DNA"/>
</dbReference>
<dbReference type="RefSeq" id="WP_006190502.1">
    <property type="nucleotide sequence ID" value="NZ_KN046804.1"/>
</dbReference>
<dbReference type="SMR" id="Q8G076"/>
<dbReference type="GeneID" id="45052268"/>
<dbReference type="KEGG" id="bms:BR1233"/>
<dbReference type="KEGG" id="bsi:BS1330_I1229"/>
<dbReference type="PATRIC" id="fig|204722.21.peg.2243"/>
<dbReference type="HOGENOM" id="CLU_044142_2_0_5"/>
<dbReference type="Proteomes" id="UP000007104">
    <property type="component" value="Chromosome I"/>
</dbReference>
<dbReference type="GO" id="GO:0022625">
    <property type="term" value="C:cytosolic large ribosomal subunit"/>
    <property type="evidence" value="ECO:0007669"/>
    <property type="project" value="TreeGrafter"/>
</dbReference>
<dbReference type="GO" id="GO:0019843">
    <property type="term" value="F:rRNA binding"/>
    <property type="evidence" value="ECO:0007669"/>
    <property type="project" value="UniProtKB-UniRule"/>
</dbReference>
<dbReference type="GO" id="GO:0003735">
    <property type="term" value="F:structural constituent of ribosome"/>
    <property type="evidence" value="ECO:0007669"/>
    <property type="project" value="InterPro"/>
</dbReference>
<dbReference type="GO" id="GO:0006412">
    <property type="term" value="P:translation"/>
    <property type="evidence" value="ECO:0007669"/>
    <property type="project" value="UniProtKB-UniRule"/>
</dbReference>
<dbReference type="FunFam" id="2.40.30.10:FF:000004">
    <property type="entry name" value="50S ribosomal protein L3"/>
    <property type="match status" value="1"/>
</dbReference>
<dbReference type="FunFam" id="3.30.160.810:FF:000001">
    <property type="entry name" value="50S ribosomal protein L3"/>
    <property type="match status" value="1"/>
</dbReference>
<dbReference type="Gene3D" id="3.30.160.810">
    <property type="match status" value="1"/>
</dbReference>
<dbReference type="Gene3D" id="2.40.30.10">
    <property type="entry name" value="Translation factors"/>
    <property type="match status" value="1"/>
</dbReference>
<dbReference type="HAMAP" id="MF_01325_B">
    <property type="entry name" value="Ribosomal_uL3_B"/>
    <property type="match status" value="1"/>
</dbReference>
<dbReference type="InterPro" id="IPR000597">
    <property type="entry name" value="Ribosomal_uL3"/>
</dbReference>
<dbReference type="InterPro" id="IPR019927">
    <property type="entry name" value="Ribosomal_uL3_bac/org-type"/>
</dbReference>
<dbReference type="InterPro" id="IPR019926">
    <property type="entry name" value="Ribosomal_uL3_CS"/>
</dbReference>
<dbReference type="InterPro" id="IPR009000">
    <property type="entry name" value="Transl_B-barrel_sf"/>
</dbReference>
<dbReference type="NCBIfam" id="TIGR03625">
    <property type="entry name" value="L3_bact"/>
    <property type="match status" value="1"/>
</dbReference>
<dbReference type="PANTHER" id="PTHR11229">
    <property type="entry name" value="50S RIBOSOMAL PROTEIN L3"/>
    <property type="match status" value="1"/>
</dbReference>
<dbReference type="PANTHER" id="PTHR11229:SF16">
    <property type="entry name" value="LARGE RIBOSOMAL SUBUNIT PROTEIN UL3C"/>
    <property type="match status" value="1"/>
</dbReference>
<dbReference type="Pfam" id="PF00297">
    <property type="entry name" value="Ribosomal_L3"/>
    <property type="match status" value="1"/>
</dbReference>
<dbReference type="SUPFAM" id="SSF50447">
    <property type="entry name" value="Translation proteins"/>
    <property type="match status" value="1"/>
</dbReference>
<dbReference type="PROSITE" id="PS00474">
    <property type="entry name" value="RIBOSOMAL_L3"/>
    <property type="match status" value="1"/>
</dbReference>
<protein>
    <recommendedName>
        <fullName evidence="1">Large ribosomal subunit protein uL3</fullName>
    </recommendedName>
    <alternativeName>
        <fullName evidence="3">50S ribosomal protein L3</fullName>
    </alternativeName>
</protein>
<sequence>MRSGVIAQKLGMTRVYNDAGEHVPVTVLRMENCHVVAQRTVEKNGYTAVQLGVGVAKVKNTSKAMRGHFAKAEVEPKAKLAEFRVSPDNLLEVGVEITAEHFVAGQKVDVTGTSIGKGFAGVMKRHNFGGHRASHGNSITHRSHGSTGQRQDPGKVFKGKKMAGHMGQTRVTTQNIEVVSTDSDRGLILVRGAVPGSKGAWILVRDAVKASLPENAPKPAGLRAGAKAEAAATEGAE</sequence>
<name>RL3_BRUSU</name>
<proteinExistence type="inferred from homology"/>
<gene>
    <name evidence="1" type="primary">rplC</name>
    <name type="ordered locus">BR1233</name>
    <name type="ordered locus">BS1330_I1229</name>
</gene>
<evidence type="ECO:0000255" key="1">
    <source>
        <dbReference type="HAMAP-Rule" id="MF_01325"/>
    </source>
</evidence>
<evidence type="ECO:0000256" key="2">
    <source>
        <dbReference type="SAM" id="MobiDB-lite"/>
    </source>
</evidence>
<evidence type="ECO:0000305" key="3"/>
<reference key="1">
    <citation type="journal article" date="2002" name="Proc. Natl. Acad. Sci. U.S.A.">
        <title>The Brucella suis genome reveals fundamental similarities between animal and plant pathogens and symbionts.</title>
        <authorList>
            <person name="Paulsen I.T."/>
            <person name="Seshadri R."/>
            <person name="Nelson K.E."/>
            <person name="Eisen J.A."/>
            <person name="Heidelberg J.F."/>
            <person name="Read T.D."/>
            <person name="Dodson R.J."/>
            <person name="Umayam L.A."/>
            <person name="Brinkac L.M."/>
            <person name="Beanan M.J."/>
            <person name="Daugherty S.C."/>
            <person name="DeBoy R.T."/>
            <person name="Durkin A.S."/>
            <person name="Kolonay J.F."/>
            <person name="Madupu R."/>
            <person name="Nelson W.C."/>
            <person name="Ayodeji B."/>
            <person name="Kraul M."/>
            <person name="Shetty J."/>
            <person name="Malek J.A."/>
            <person name="Van Aken S.E."/>
            <person name="Riedmuller S."/>
            <person name="Tettelin H."/>
            <person name="Gill S.R."/>
            <person name="White O."/>
            <person name="Salzberg S.L."/>
            <person name="Hoover D.L."/>
            <person name="Lindler L.E."/>
            <person name="Halling S.M."/>
            <person name="Boyle S.M."/>
            <person name="Fraser C.M."/>
        </authorList>
    </citation>
    <scope>NUCLEOTIDE SEQUENCE [LARGE SCALE GENOMIC DNA]</scope>
    <source>
        <strain>1330</strain>
    </source>
</reference>
<reference key="2">
    <citation type="journal article" date="2011" name="J. Bacteriol.">
        <title>Revised genome sequence of Brucella suis 1330.</title>
        <authorList>
            <person name="Tae H."/>
            <person name="Shallom S."/>
            <person name="Settlage R."/>
            <person name="Preston D."/>
            <person name="Adams L.G."/>
            <person name="Garner H.R."/>
        </authorList>
    </citation>
    <scope>NUCLEOTIDE SEQUENCE [LARGE SCALE GENOMIC DNA]</scope>
    <source>
        <strain>1330</strain>
    </source>
</reference>
<keyword id="KW-0488">Methylation</keyword>
<keyword id="KW-0687">Ribonucleoprotein</keyword>
<keyword id="KW-0689">Ribosomal protein</keyword>
<keyword id="KW-0694">RNA-binding</keyword>
<keyword id="KW-0699">rRNA-binding</keyword>